<feature type="chain" id="PRO_1000009231" description="UPF0102 protein Meso_4010">
    <location>
        <begin position="1"/>
        <end position="124"/>
    </location>
</feature>
<accession>Q11B48</accession>
<dbReference type="EMBL" id="CP000390">
    <property type="protein sequence ID" value="ABG65377.1"/>
    <property type="molecule type" value="Genomic_DNA"/>
</dbReference>
<dbReference type="SMR" id="Q11B48"/>
<dbReference type="STRING" id="266779.Meso_4010"/>
<dbReference type="KEGG" id="mes:Meso_4010"/>
<dbReference type="eggNOG" id="COG0792">
    <property type="taxonomic scope" value="Bacteria"/>
</dbReference>
<dbReference type="HOGENOM" id="CLU_115353_0_2_5"/>
<dbReference type="OrthoDB" id="9812968at2"/>
<dbReference type="GO" id="GO:0003676">
    <property type="term" value="F:nucleic acid binding"/>
    <property type="evidence" value="ECO:0007669"/>
    <property type="project" value="InterPro"/>
</dbReference>
<dbReference type="Gene3D" id="3.40.1350.10">
    <property type="match status" value="1"/>
</dbReference>
<dbReference type="HAMAP" id="MF_00048">
    <property type="entry name" value="UPF0102"/>
    <property type="match status" value="1"/>
</dbReference>
<dbReference type="InterPro" id="IPR011335">
    <property type="entry name" value="Restrct_endonuc-II-like"/>
</dbReference>
<dbReference type="InterPro" id="IPR011856">
    <property type="entry name" value="tRNA_endonuc-like_dom_sf"/>
</dbReference>
<dbReference type="InterPro" id="IPR003509">
    <property type="entry name" value="UPF0102_YraN-like"/>
</dbReference>
<dbReference type="NCBIfam" id="NF009151">
    <property type="entry name" value="PRK12497.1-5"/>
    <property type="match status" value="1"/>
</dbReference>
<dbReference type="PANTHER" id="PTHR34039">
    <property type="entry name" value="UPF0102 PROTEIN YRAN"/>
    <property type="match status" value="1"/>
</dbReference>
<dbReference type="PANTHER" id="PTHR34039:SF1">
    <property type="entry name" value="UPF0102 PROTEIN YRAN"/>
    <property type="match status" value="1"/>
</dbReference>
<dbReference type="Pfam" id="PF02021">
    <property type="entry name" value="UPF0102"/>
    <property type="match status" value="1"/>
</dbReference>
<dbReference type="SUPFAM" id="SSF52980">
    <property type="entry name" value="Restriction endonuclease-like"/>
    <property type="match status" value="1"/>
</dbReference>
<reference key="1">
    <citation type="submission" date="2006-06" db="EMBL/GenBank/DDBJ databases">
        <title>Complete sequence of chromosome of Mesorhizobium sp. BNC1.</title>
        <authorList>
            <consortium name="US DOE Joint Genome Institute"/>
            <person name="Copeland A."/>
            <person name="Lucas S."/>
            <person name="Lapidus A."/>
            <person name="Barry K."/>
            <person name="Detter J.C."/>
            <person name="Glavina del Rio T."/>
            <person name="Hammon N."/>
            <person name="Israni S."/>
            <person name="Dalin E."/>
            <person name="Tice H."/>
            <person name="Pitluck S."/>
            <person name="Chertkov O."/>
            <person name="Brettin T."/>
            <person name="Bruce D."/>
            <person name="Han C."/>
            <person name="Tapia R."/>
            <person name="Gilna P."/>
            <person name="Schmutz J."/>
            <person name="Larimer F."/>
            <person name="Land M."/>
            <person name="Hauser L."/>
            <person name="Kyrpides N."/>
            <person name="Mikhailova N."/>
            <person name="Richardson P."/>
        </authorList>
    </citation>
    <scope>NUCLEOTIDE SEQUENCE [LARGE SCALE GENOMIC DNA]</scope>
    <source>
        <strain>BNC1</strain>
    </source>
</reference>
<protein>
    <recommendedName>
        <fullName evidence="1">UPF0102 protein Meso_4010</fullName>
    </recommendedName>
</protein>
<proteinExistence type="inferred from homology"/>
<organism>
    <name type="scientific">Chelativorans sp. (strain BNC1)</name>
    <dbReference type="NCBI Taxonomy" id="266779"/>
    <lineage>
        <taxon>Bacteria</taxon>
        <taxon>Pseudomonadati</taxon>
        <taxon>Pseudomonadota</taxon>
        <taxon>Alphaproteobacteria</taxon>
        <taxon>Hyphomicrobiales</taxon>
        <taxon>Phyllobacteriaceae</taxon>
        <taxon>Chelativorans</taxon>
    </lineage>
</organism>
<evidence type="ECO:0000255" key="1">
    <source>
        <dbReference type="HAMAP-Rule" id="MF_00048"/>
    </source>
</evidence>
<name>Y4010_CHESB</name>
<sequence>MGAEARLSRQRAYRKGHRGEWLAAFALRLKGYRILAHRFKTPLGEIDLIARRGDLVAIVEVKARPTLGEAMEAVSFTAQRRIDAAADLWLSRQPDYARLSLRYDLVAVLPRRWPVHVENIYAAR</sequence>
<comment type="similarity">
    <text evidence="1">Belongs to the UPF0102 family.</text>
</comment>
<gene>
    <name type="ordered locus">Meso_4010</name>
</gene>